<reference key="1">
    <citation type="journal article" date="1996" name="Development">
        <title>Ectopic expression of Hoxa-1 in the zebrafish alters the fate of the mandibular arch neural crest and phenocopies a retinoic acid-induced phenotype.</title>
        <authorList>
            <person name="Alexandre D."/>
            <person name="Clarke J.D.W."/>
            <person name="Oxtoby E."/>
            <person name="Yan Y.-L."/>
            <person name="Jowett T."/>
            <person name="Holder N."/>
        </authorList>
    </citation>
    <scope>NUCLEOTIDE SEQUENCE [GENOMIC DNA]</scope>
    <scope>FUNCTION</scope>
    <scope>INDUCTION</scope>
    <scope>DEVELOPMENTAL STAGE</scope>
</reference>
<reference key="2">
    <citation type="journal article" date="2001" name="Development">
        <title>Consequences of Hox gene duplication in the vertebrates: an investigation of the zebrafish Hox paralogue group 1 genes.</title>
        <authorList>
            <person name="McClintock J.M."/>
            <person name="Carlson R."/>
            <person name="Mann D.M."/>
            <person name="Prince V.E."/>
        </authorList>
    </citation>
    <scope>NUCLEOTIDE SEQUENCE [MRNA]</scope>
</reference>
<reference key="3">
    <citation type="journal article" date="2013" name="Nature">
        <title>The zebrafish reference genome sequence and its relationship to the human genome.</title>
        <authorList>
            <person name="Howe K."/>
            <person name="Clark M.D."/>
            <person name="Torroja C.F."/>
            <person name="Torrance J."/>
            <person name="Berthelot C."/>
            <person name="Muffato M."/>
            <person name="Collins J.E."/>
            <person name="Humphray S."/>
            <person name="McLaren K."/>
            <person name="Matthews L."/>
            <person name="McLaren S."/>
            <person name="Sealy I."/>
            <person name="Caccamo M."/>
            <person name="Churcher C."/>
            <person name="Scott C."/>
            <person name="Barrett J.C."/>
            <person name="Koch R."/>
            <person name="Rauch G.J."/>
            <person name="White S."/>
            <person name="Chow W."/>
            <person name="Kilian B."/>
            <person name="Quintais L.T."/>
            <person name="Guerra-Assuncao J.A."/>
            <person name="Zhou Y."/>
            <person name="Gu Y."/>
            <person name="Yen J."/>
            <person name="Vogel J.H."/>
            <person name="Eyre T."/>
            <person name="Redmond S."/>
            <person name="Banerjee R."/>
            <person name="Chi J."/>
            <person name="Fu B."/>
            <person name="Langley E."/>
            <person name="Maguire S.F."/>
            <person name="Laird G.K."/>
            <person name="Lloyd D."/>
            <person name="Kenyon E."/>
            <person name="Donaldson S."/>
            <person name="Sehra H."/>
            <person name="Almeida-King J."/>
            <person name="Loveland J."/>
            <person name="Trevanion S."/>
            <person name="Jones M."/>
            <person name="Quail M."/>
            <person name="Willey D."/>
            <person name="Hunt A."/>
            <person name="Burton J."/>
            <person name="Sims S."/>
            <person name="McLay K."/>
            <person name="Plumb B."/>
            <person name="Davis J."/>
            <person name="Clee C."/>
            <person name="Oliver K."/>
            <person name="Clark R."/>
            <person name="Riddle C."/>
            <person name="Elliot D."/>
            <person name="Threadgold G."/>
            <person name="Harden G."/>
            <person name="Ware D."/>
            <person name="Begum S."/>
            <person name="Mortimore B."/>
            <person name="Kerry G."/>
            <person name="Heath P."/>
            <person name="Phillimore B."/>
            <person name="Tracey A."/>
            <person name="Corby N."/>
            <person name="Dunn M."/>
            <person name="Johnson C."/>
            <person name="Wood J."/>
            <person name="Clark S."/>
            <person name="Pelan S."/>
            <person name="Griffiths G."/>
            <person name="Smith M."/>
            <person name="Glithero R."/>
            <person name="Howden P."/>
            <person name="Barker N."/>
            <person name="Lloyd C."/>
            <person name="Stevens C."/>
            <person name="Harley J."/>
            <person name="Holt K."/>
            <person name="Panagiotidis G."/>
            <person name="Lovell J."/>
            <person name="Beasley H."/>
            <person name="Henderson C."/>
            <person name="Gordon D."/>
            <person name="Auger K."/>
            <person name="Wright D."/>
            <person name="Collins J."/>
            <person name="Raisen C."/>
            <person name="Dyer L."/>
            <person name="Leung K."/>
            <person name="Robertson L."/>
            <person name="Ambridge K."/>
            <person name="Leongamornlert D."/>
            <person name="McGuire S."/>
            <person name="Gilderthorp R."/>
            <person name="Griffiths C."/>
            <person name="Manthravadi D."/>
            <person name="Nichol S."/>
            <person name="Barker G."/>
            <person name="Whitehead S."/>
            <person name="Kay M."/>
            <person name="Brown J."/>
            <person name="Murnane C."/>
            <person name="Gray E."/>
            <person name="Humphries M."/>
            <person name="Sycamore N."/>
            <person name="Barker D."/>
            <person name="Saunders D."/>
            <person name="Wallis J."/>
            <person name="Babbage A."/>
            <person name="Hammond S."/>
            <person name="Mashreghi-Mohammadi M."/>
            <person name="Barr L."/>
            <person name="Martin S."/>
            <person name="Wray P."/>
            <person name="Ellington A."/>
            <person name="Matthews N."/>
            <person name="Ellwood M."/>
            <person name="Woodmansey R."/>
            <person name="Clark G."/>
            <person name="Cooper J."/>
            <person name="Tromans A."/>
            <person name="Grafham D."/>
            <person name="Skuce C."/>
            <person name="Pandian R."/>
            <person name="Andrews R."/>
            <person name="Harrison E."/>
            <person name="Kimberley A."/>
            <person name="Garnett J."/>
            <person name="Fosker N."/>
            <person name="Hall R."/>
            <person name="Garner P."/>
            <person name="Kelly D."/>
            <person name="Bird C."/>
            <person name="Palmer S."/>
            <person name="Gehring I."/>
            <person name="Berger A."/>
            <person name="Dooley C.M."/>
            <person name="Ersan-Urun Z."/>
            <person name="Eser C."/>
            <person name="Geiger H."/>
            <person name="Geisler M."/>
            <person name="Karotki L."/>
            <person name="Kirn A."/>
            <person name="Konantz J."/>
            <person name="Konantz M."/>
            <person name="Oberlander M."/>
            <person name="Rudolph-Geiger S."/>
            <person name="Teucke M."/>
            <person name="Lanz C."/>
            <person name="Raddatz G."/>
            <person name="Osoegawa K."/>
            <person name="Zhu B."/>
            <person name="Rapp A."/>
            <person name="Widaa S."/>
            <person name="Langford C."/>
            <person name="Yang F."/>
            <person name="Schuster S.C."/>
            <person name="Carter N.P."/>
            <person name="Harrow J."/>
            <person name="Ning Z."/>
            <person name="Herrero J."/>
            <person name="Searle S.M."/>
            <person name="Enright A."/>
            <person name="Geisler R."/>
            <person name="Plasterk R.H."/>
            <person name="Lee C."/>
            <person name="Westerfield M."/>
            <person name="de Jong P.J."/>
            <person name="Zon L.I."/>
            <person name="Postlethwait J.H."/>
            <person name="Nusslein-Volhard C."/>
            <person name="Hubbard T.J."/>
            <person name="Roest Crollius H."/>
            <person name="Rogers J."/>
            <person name="Stemple D.L."/>
        </authorList>
    </citation>
    <scope>NUCLEOTIDE SEQUENCE [LARGE SCALE GENOMIC DNA]</scope>
    <source>
        <strain>Tuebingen</strain>
    </source>
</reference>
<reference key="4">
    <citation type="journal article" date="2005" name="Evol. Dev.">
        <title>Genomic annotation and transcriptome analysis of the zebrafish (Danio rerio) hox complex with description of a novel member, hoxb13a.</title>
        <authorList>
            <person name="Corredor-Adamez M."/>
            <person name="Welten M.C.M."/>
            <person name="Spaink H.P."/>
            <person name="Jeffery J.E."/>
            <person name="Schoon R.T."/>
            <person name="de Bakker M.A.G."/>
            <person name="Bagowski C.P."/>
            <person name="Meijer A.H."/>
            <person name="Verbeek F.J."/>
            <person name="Richardson M.K."/>
        </authorList>
    </citation>
    <scope>NUCLEOTIDE SEQUENCE [MRNA] OF 105-203</scope>
    <source>
        <strain>Tuebingen</strain>
    </source>
</reference>
<organism>
    <name type="scientific">Danio rerio</name>
    <name type="common">Zebrafish</name>
    <name type="synonym">Brachydanio rerio</name>
    <dbReference type="NCBI Taxonomy" id="7955"/>
    <lineage>
        <taxon>Eukaryota</taxon>
        <taxon>Metazoa</taxon>
        <taxon>Chordata</taxon>
        <taxon>Craniata</taxon>
        <taxon>Vertebrata</taxon>
        <taxon>Euteleostomi</taxon>
        <taxon>Actinopterygii</taxon>
        <taxon>Neopterygii</taxon>
        <taxon>Teleostei</taxon>
        <taxon>Ostariophysi</taxon>
        <taxon>Cypriniformes</taxon>
        <taxon>Danionidae</taxon>
        <taxon>Danioninae</taxon>
        <taxon>Danio</taxon>
    </lineage>
</organism>
<comment type="function">
    <text evidence="6">Sequence-specific transcription factor. Part of a developmental regulatory system that provides cells with specific positional identities on the anterior-posterior axis. Acts on the anterior body structures. Seems to act in the maintenance and/or generation of hindbrain segments.</text>
</comment>
<comment type="subcellular location">
    <subcellularLocation>
        <location evidence="1">Nucleus</location>
    </subcellularLocation>
</comment>
<comment type="developmental stage">
    <text evidence="4">First expressed at 50% epiboly in the shield region. During somitogenesis, present in the spinal cord and endoderm with an anterior expression limit at around rhombomere 4.</text>
</comment>
<comment type="induction">
    <text evidence="4">By retinoic acid.</text>
</comment>
<comment type="similarity">
    <text evidence="5">Belongs to the Antp homeobox family. Labial subfamily.</text>
</comment>
<gene>
    <name type="primary">hoxb1b</name>
    <name type="synonym">hoxa-1</name>
    <name type="synonym">hoxa1</name>
</gene>
<name>HXB1B_DANRE</name>
<keyword id="KW-0217">Developmental protein</keyword>
<keyword id="KW-0238">DNA-binding</keyword>
<keyword id="KW-0371">Homeobox</keyword>
<keyword id="KW-0539">Nucleus</keyword>
<keyword id="KW-1185">Reference proteome</keyword>
<keyword id="KW-0804">Transcription</keyword>
<keyword id="KW-0805">Transcription regulation</keyword>
<accession>Q90423</accession>
<accession>Q4PR97</accession>
<accession>Q8JH52</accession>
<accession>Q98SH8</accession>
<evidence type="ECO:0000250" key="1">
    <source>
        <dbReference type="UniProtKB" id="P09022"/>
    </source>
</evidence>
<evidence type="ECO:0000255" key="2">
    <source>
        <dbReference type="PROSITE-ProRule" id="PRU00108"/>
    </source>
</evidence>
<evidence type="ECO:0000256" key="3">
    <source>
        <dbReference type="SAM" id="MobiDB-lite"/>
    </source>
</evidence>
<evidence type="ECO:0000269" key="4">
    <source>
    </source>
</evidence>
<evidence type="ECO:0000305" key="5"/>
<evidence type="ECO:0000305" key="6">
    <source>
    </source>
</evidence>
<feature type="chain" id="PRO_0000200111" description="Homeobox protein Hox-B1b">
    <location>
        <begin position="1"/>
        <end position="307"/>
    </location>
</feature>
<feature type="DNA-binding region" description="Homeobox" evidence="2">
    <location>
        <begin position="208"/>
        <end position="267"/>
    </location>
</feature>
<feature type="region of interest" description="Disordered" evidence="3">
    <location>
        <begin position="159"/>
        <end position="178"/>
    </location>
</feature>
<feature type="region of interest" description="Disordered" evidence="3">
    <location>
        <begin position="265"/>
        <end position="307"/>
    </location>
</feature>
<feature type="short sequence motif" description="Antp-type hexapeptide">
    <location>
        <begin position="183"/>
        <end position="188"/>
    </location>
</feature>
<feature type="compositionally biased region" description="Polar residues" evidence="3">
    <location>
        <begin position="162"/>
        <end position="178"/>
    </location>
</feature>
<feature type="compositionally biased region" description="Low complexity" evidence="3">
    <location>
        <begin position="287"/>
        <end position="307"/>
    </location>
</feature>
<feature type="sequence conflict" description="In Ref. 1; AAB04107." evidence="5" ref="1">
    <original>P</original>
    <variation>A</variation>
    <location>
        <position position="72"/>
    </location>
</feature>
<feature type="sequence conflict" description="In Ref. 1 and 2." evidence="5" ref="1 2">
    <original>Y</original>
    <variation>C</variation>
    <location>
        <position position="158"/>
    </location>
</feature>
<feature type="sequence conflict" description="In Ref. 3; CAD44460." evidence="5" ref="3">
    <original>N</original>
    <variation>K</variation>
    <location>
        <position position="192"/>
    </location>
</feature>
<feature type="sequence conflict" description="In Ref. 1." evidence="5" ref="1">
    <original>ADHSTSSSPGA</original>
    <variation>RRPLKLAHRLVP</variation>
    <location>
        <begin position="287"/>
        <end position="297"/>
    </location>
</feature>
<sequence>MNSYLDYTIYNRGSNTYSSKVGCFPVEQEYLPSACASTNSYIPEGRPVGGNTFTSAPHETHGTSYAQIQSQPFHLNVDMGKTGHSNFCKQTRPPHSDYGHQHVLTQADDHMRLQSPGFSVVNMGANIGTYSESNCRPGSVSASHYQSYAYGEPEPHGYGSFSKYQVSPDSDSDSKTNIKQAPTFDWMKVKRNPPKTVKVAEYGIHGQQNIIRTNFTTKQLTELEKEFHFNKYLTRARRVEVAATLELNETQVKIWFQNRRMKQKKREKEGTAPVIKRVTLCSSGQNADHSTSSSPGASPTSDSSTAI</sequence>
<dbReference type="EMBL" id="U40995">
    <property type="protein sequence ID" value="AAB04107.1"/>
    <property type="molecule type" value="Genomic_DNA"/>
</dbReference>
<dbReference type="EMBL" id="AJ306433">
    <property type="protein sequence ID" value="CAC34568.1"/>
    <property type="molecule type" value="mRNA"/>
</dbReference>
<dbReference type="EMBL" id="AL645798">
    <property type="protein sequence ID" value="CAD44460.1"/>
    <property type="molecule type" value="Genomic_DNA"/>
</dbReference>
<dbReference type="EMBL" id="DQ060546">
    <property type="protein sequence ID" value="AAY67924.1"/>
    <property type="molecule type" value="mRNA"/>
</dbReference>
<dbReference type="RefSeq" id="NP_571217.2">
    <property type="nucleotide sequence ID" value="NM_131142.2"/>
</dbReference>
<dbReference type="RefSeq" id="XP_005156323.1">
    <property type="nucleotide sequence ID" value="XM_005156266.3"/>
</dbReference>
<dbReference type="RefSeq" id="XP_005156324.1">
    <property type="nucleotide sequence ID" value="XM_005156267.3"/>
</dbReference>
<dbReference type="RefSeq" id="XP_017213916.1">
    <property type="nucleotide sequence ID" value="XM_017358427.1"/>
</dbReference>
<dbReference type="RefSeq" id="XP_017213917.1">
    <property type="nucleotide sequence ID" value="XM_017358428.1"/>
</dbReference>
<dbReference type="RefSeq" id="XP_017213918.1">
    <property type="nucleotide sequence ID" value="XM_017358429.1"/>
</dbReference>
<dbReference type="SMR" id="Q90423"/>
<dbReference type="FunCoup" id="Q90423">
    <property type="interactions" value="2"/>
</dbReference>
<dbReference type="STRING" id="7955.ENSDARP00000122259"/>
<dbReference type="PaxDb" id="7955-ENSDARP00000122259"/>
<dbReference type="Ensembl" id="ENSDART00000185828">
    <property type="protein sequence ID" value="ENSDARP00000147825"/>
    <property type="gene ID" value="ENSDARG00000112663"/>
</dbReference>
<dbReference type="GeneID" id="30374"/>
<dbReference type="KEGG" id="dre:30374"/>
<dbReference type="AGR" id="ZFIN:ZDB-GENE-980526-290"/>
<dbReference type="CTD" id="30374"/>
<dbReference type="ZFIN" id="ZDB-GENE-980526-290">
    <property type="gene designation" value="hoxb1b"/>
</dbReference>
<dbReference type="eggNOG" id="KOG0489">
    <property type="taxonomic scope" value="Eukaryota"/>
</dbReference>
<dbReference type="InParanoid" id="Q90423"/>
<dbReference type="OMA" id="HHQTHVN"/>
<dbReference type="OrthoDB" id="6159439at2759"/>
<dbReference type="PhylomeDB" id="Q90423"/>
<dbReference type="TreeFam" id="TF317730"/>
<dbReference type="PRO" id="PR:Q90423"/>
<dbReference type="Proteomes" id="UP000000437">
    <property type="component" value="Alternate scaffold 12"/>
</dbReference>
<dbReference type="Proteomes" id="UP000000437">
    <property type="component" value="Chromosome 12"/>
</dbReference>
<dbReference type="Bgee" id="ENSDARG00000112663">
    <property type="expression patterns" value="Expressed in spinal cord neural tube and 31 other cell types or tissues"/>
</dbReference>
<dbReference type="GO" id="GO:0005634">
    <property type="term" value="C:nucleus"/>
    <property type="evidence" value="ECO:0000318"/>
    <property type="project" value="GO_Central"/>
</dbReference>
<dbReference type="GO" id="GO:0000981">
    <property type="term" value="F:DNA-binding transcription factor activity, RNA polymerase II-specific"/>
    <property type="evidence" value="ECO:0000318"/>
    <property type="project" value="GO_Central"/>
</dbReference>
<dbReference type="GO" id="GO:0000978">
    <property type="term" value="F:RNA polymerase II cis-regulatory region sequence-specific DNA binding"/>
    <property type="evidence" value="ECO:0000318"/>
    <property type="project" value="GO_Central"/>
</dbReference>
<dbReference type="GO" id="GO:0043565">
    <property type="term" value="F:sequence-specific DNA binding"/>
    <property type="evidence" value="ECO:0000314"/>
    <property type="project" value="ZFIN"/>
</dbReference>
<dbReference type="GO" id="GO:0000132">
    <property type="term" value="P:establishment of mitotic spindle orientation"/>
    <property type="evidence" value="ECO:0000315"/>
    <property type="project" value="ZFIN"/>
</dbReference>
<dbReference type="GO" id="GO:0021592">
    <property type="term" value="P:fourth ventricle development"/>
    <property type="evidence" value="ECO:0000315"/>
    <property type="project" value="ZFIN"/>
</dbReference>
<dbReference type="GO" id="GO:0030902">
    <property type="term" value="P:hindbrain development"/>
    <property type="evidence" value="ECO:0000315"/>
    <property type="project" value="ZFIN"/>
</dbReference>
<dbReference type="GO" id="GO:0021575">
    <property type="term" value="P:hindbrain morphogenesis"/>
    <property type="evidence" value="ECO:0000315"/>
    <property type="project" value="ZFIN"/>
</dbReference>
<dbReference type="GO" id="GO:0014025">
    <property type="term" value="P:neural keel formation"/>
    <property type="evidence" value="ECO:0000315"/>
    <property type="project" value="ZFIN"/>
</dbReference>
<dbReference type="GO" id="GO:0034728">
    <property type="term" value="P:nucleosome organization"/>
    <property type="evidence" value="ECO:0000314"/>
    <property type="project" value="ZFIN"/>
</dbReference>
<dbReference type="GO" id="GO:0071599">
    <property type="term" value="P:otic vesicle development"/>
    <property type="evidence" value="ECO:0000315"/>
    <property type="project" value="ZFIN"/>
</dbReference>
<dbReference type="GO" id="GO:0006357">
    <property type="term" value="P:regulation of transcription by RNA polymerase II"/>
    <property type="evidence" value="ECO:0000318"/>
    <property type="project" value="GO_Central"/>
</dbReference>
<dbReference type="GO" id="GO:0021570">
    <property type="term" value="P:rhombomere 4 development"/>
    <property type="evidence" value="ECO:0000315"/>
    <property type="project" value="ZFIN"/>
</dbReference>
<dbReference type="GO" id="GO:0021663">
    <property type="term" value="P:rhombomere 4 formation"/>
    <property type="evidence" value="ECO:0000315"/>
    <property type="project" value="ZFIN"/>
</dbReference>
<dbReference type="GO" id="GO:0021593">
    <property type="term" value="P:rhombomere morphogenesis"/>
    <property type="evidence" value="ECO:0000315"/>
    <property type="project" value="ZFIN"/>
</dbReference>
<dbReference type="GO" id="GO:0003187">
    <property type="term" value="P:ventriculo bulbo valve morphogenesis"/>
    <property type="evidence" value="ECO:0000315"/>
    <property type="project" value="ZFIN"/>
</dbReference>
<dbReference type="CDD" id="cd00086">
    <property type="entry name" value="homeodomain"/>
    <property type="match status" value="1"/>
</dbReference>
<dbReference type="FunFam" id="1.10.10.60:FF:000113">
    <property type="entry name" value="homeobox protein Hox-B1"/>
    <property type="match status" value="1"/>
</dbReference>
<dbReference type="Gene3D" id="1.10.10.60">
    <property type="entry name" value="Homeodomain-like"/>
    <property type="match status" value="1"/>
</dbReference>
<dbReference type="InterPro" id="IPR001356">
    <property type="entry name" value="HD"/>
</dbReference>
<dbReference type="InterPro" id="IPR020479">
    <property type="entry name" value="HD_metazoa"/>
</dbReference>
<dbReference type="InterPro" id="IPR017970">
    <property type="entry name" value="Homeobox_CS"/>
</dbReference>
<dbReference type="InterPro" id="IPR009057">
    <property type="entry name" value="Homeodomain-like_sf"/>
</dbReference>
<dbReference type="InterPro" id="IPR046327">
    <property type="entry name" value="HXA1/B1/D1"/>
</dbReference>
<dbReference type="PANTHER" id="PTHR45946:SF5">
    <property type="entry name" value="HOMEOBOX PROTEIN HOX-B1"/>
    <property type="match status" value="1"/>
</dbReference>
<dbReference type="PANTHER" id="PTHR45946">
    <property type="entry name" value="HOMEOBOX PROTEIN ROUGH-RELATED"/>
    <property type="match status" value="1"/>
</dbReference>
<dbReference type="Pfam" id="PF00046">
    <property type="entry name" value="Homeodomain"/>
    <property type="match status" value="1"/>
</dbReference>
<dbReference type="PRINTS" id="PR00024">
    <property type="entry name" value="HOMEOBOX"/>
</dbReference>
<dbReference type="SMART" id="SM00389">
    <property type="entry name" value="HOX"/>
    <property type="match status" value="1"/>
</dbReference>
<dbReference type="SUPFAM" id="SSF46689">
    <property type="entry name" value="Homeodomain-like"/>
    <property type="match status" value="1"/>
</dbReference>
<dbReference type="PROSITE" id="PS00027">
    <property type="entry name" value="HOMEOBOX_1"/>
    <property type="match status" value="1"/>
</dbReference>
<dbReference type="PROSITE" id="PS50071">
    <property type="entry name" value="HOMEOBOX_2"/>
    <property type="match status" value="1"/>
</dbReference>
<proteinExistence type="evidence at transcript level"/>
<protein>
    <recommendedName>
        <fullName>Homeobox protein Hox-B1b</fullName>
    </recommendedName>
    <alternativeName>
        <fullName>Homeobox protein Hox-A1</fullName>
    </alternativeName>
</protein>